<protein>
    <recommendedName>
        <fullName>Pantothenate kinase</fullName>
        <ecNumber>2.7.1.33</ecNumber>
    </recommendedName>
    <alternativeName>
        <fullName>Pantothenic acid kinase</fullName>
    </alternativeName>
</protein>
<sequence>MSIKEQSLMTPYLQFDRSQWAALRDSVPMTLTEDEIAQLKGINEDLSLEEVAEIYLPLSRLLNFYISSNLRRQAVLEQFLGTNGQRIPYIISIAGSVAVGKSTTARVLQALLSRWPEHRRVELITTDGFLHPNQVLKERGLMKKKGFPESYDMHRLVKFVSDLKSGVPNVTAPVYSHLIYDVIPEGDKTVAQPDILILEGLNVLQSGMDYPHDPHHVFVSDFVDFSIYVDAPEELLQTWYINRFLKFREGAFTDPDSYFHNYAKLSKEEAVNTATSLWKEINWLNLKQNILPTRERASLIMTKSANHAVEQVRLRK</sequence>
<feature type="chain" id="PRO_0000194446" description="Pantothenate kinase">
    <location>
        <begin position="1"/>
        <end position="316"/>
    </location>
</feature>
<feature type="binding site" evidence="2">
    <location>
        <begin position="95"/>
        <end position="102"/>
    </location>
    <ligand>
        <name>ATP</name>
        <dbReference type="ChEBI" id="CHEBI:30616"/>
    </ligand>
</feature>
<keyword id="KW-0067">ATP-binding</keyword>
<keyword id="KW-0173">Coenzyme A biosynthesis</keyword>
<keyword id="KW-0963">Cytoplasm</keyword>
<keyword id="KW-0418">Kinase</keyword>
<keyword id="KW-0547">Nucleotide-binding</keyword>
<keyword id="KW-1185">Reference proteome</keyword>
<keyword id="KW-0808">Transferase</keyword>
<gene>
    <name type="primary">coaA</name>
    <name type="ordered locus">STM4139</name>
    <name type="ORF">STMF1.44</name>
</gene>
<comment type="catalytic activity">
    <reaction>
        <text>(R)-pantothenate + ATP = (R)-4'-phosphopantothenate + ADP + H(+)</text>
        <dbReference type="Rhea" id="RHEA:16373"/>
        <dbReference type="ChEBI" id="CHEBI:10986"/>
        <dbReference type="ChEBI" id="CHEBI:15378"/>
        <dbReference type="ChEBI" id="CHEBI:29032"/>
        <dbReference type="ChEBI" id="CHEBI:30616"/>
        <dbReference type="ChEBI" id="CHEBI:456216"/>
        <dbReference type="EC" id="2.7.1.33"/>
    </reaction>
</comment>
<comment type="pathway">
    <text>Cofactor biosynthesis; coenzyme A biosynthesis; CoA from (R)-pantothenate: step 1/5.</text>
</comment>
<comment type="subcellular location">
    <subcellularLocation>
        <location evidence="1">Cytoplasm</location>
    </subcellularLocation>
</comment>
<comment type="similarity">
    <text evidence="3">Belongs to the prokaryotic pantothenate kinase family.</text>
</comment>
<dbReference type="EC" id="2.7.1.33"/>
<dbReference type="EMBL" id="AF170176">
    <property type="protein sequence ID" value="AAF33512.1"/>
    <property type="molecule type" value="Genomic_DNA"/>
</dbReference>
<dbReference type="EMBL" id="AE006468">
    <property type="protein sequence ID" value="AAL22972.1"/>
    <property type="molecule type" value="Genomic_DNA"/>
</dbReference>
<dbReference type="RefSeq" id="NP_463013.1">
    <property type="nucleotide sequence ID" value="NC_003197.2"/>
</dbReference>
<dbReference type="RefSeq" id="WP_000023069.1">
    <property type="nucleotide sequence ID" value="NC_003197.2"/>
</dbReference>
<dbReference type="SMR" id="Q9L9K3"/>
<dbReference type="STRING" id="99287.STM4139"/>
<dbReference type="PaxDb" id="99287-STM4139"/>
<dbReference type="GeneID" id="1255665"/>
<dbReference type="KEGG" id="stm:STM4139"/>
<dbReference type="PATRIC" id="fig|99287.12.peg.4355"/>
<dbReference type="HOGENOM" id="CLU_053818_1_1_6"/>
<dbReference type="OMA" id="MQRKGFP"/>
<dbReference type="PhylomeDB" id="Q9L9K3"/>
<dbReference type="BioCyc" id="SENT99287:STM4139-MONOMER"/>
<dbReference type="UniPathway" id="UPA00241">
    <property type="reaction ID" value="UER00352"/>
</dbReference>
<dbReference type="Proteomes" id="UP000001014">
    <property type="component" value="Chromosome"/>
</dbReference>
<dbReference type="GO" id="GO:0005737">
    <property type="term" value="C:cytoplasm"/>
    <property type="evidence" value="ECO:0000318"/>
    <property type="project" value="GO_Central"/>
</dbReference>
<dbReference type="GO" id="GO:0005524">
    <property type="term" value="F:ATP binding"/>
    <property type="evidence" value="ECO:0007669"/>
    <property type="project" value="UniProtKB-UniRule"/>
</dbReference>
<dbReference type="GO" id="GO:0004594">
    <property type="term" value="F:pantothenate kinase activity"/>
    <property type="evidence" value="ECO:0000318"/>
    <property type="project" value="GO_Central"/>
</dbReference>
<dbReference type="GO" id="GO:0015937">
    <property type="term" value="P:coenzyme A biosynthetic process"/>
    <property type="evidence" value="ECO:0000318"/>
    <property type="project" value="GO_Central"/>
</dbReference>
<dbReference type="CDD" id="cd02025">
    <property type="entry name" value="PanK"/>
    <property type="match status" value="1"/>
</dbReference>
<dbReference type="FunFam" id="3.40.50.300:FF:000242">
    <property type="entry name" value="Pantothenate kinase"/>
    <property type="match status" value="1"/>
</dbReference>
<dbReference type="Gene3D" id="3.40.50.300">
    <property type="entry name" value="P-loop containing nucleotide triphosphate hydrolases"/>
    <property type="match status" value="1"/>
</dbReference>
<dbReference type="HAMAP" id="MF_00215">
    <property type="entry name" value="Pantothen_kinase_1"/>
    <property type="match status" value="1"/>
</dbReference>
<dbReference type="InterPro" id="IPR027417">
    <property type="entry name" value="P-loop_NTPase"/>
</dbReference>
<dbReference type="InterPro" id="IPR004566">
    <property type="entry name" value="PanK"/>
</dbReference>
<dbReference type="InterPro" id="IPR006083">
    <property type="entry name" value="PRK/URK"/>
</dbReference>
<dbReference type="NCBIfam" id="TIGR00554">
    <property type="entry name" value="panK_bact"/>
    <property type="match status" value="1"/>
</dbReference>
<dbReference type="PANTHER" id="PTHR10285">
    <property type="entry name" value="URIDINE KINASE"/>
    <property type="match status" value="1"/>
</dbReference>
<dbReference type="Pfam" id="PF00485">
    <property type="entry name" value="PRK"/>
    <property type="match status" value="1"/>
</dbReference>
<dbReference type="PIRSF" id="PIRSF000545">
    <property type="entry name" value="Pantothenate_kin"/>
    <property type="match status" value="1"/>
</dbReference>
<dbReference type="SUPFAM" id="SSF52540">
    <property type="entry name" value="P-loop containing nucleoside triphosphate hydrolases"/>
    <property type="match status" value="1"/>
</dbReference>
<organism>
    <name type="scientific">Salmonella typhimurium (strain LT2 / SGSC1412 / ATCC 700720)</name>
    <dbReference type="NCBI Taxonomy" id="99287"/>
    <lineage>
        <taxon>Bacteria</taxon>
        <taxon>Pseudomonadati</taxon>
        <taxon>Pseudomonadota</taxon>
        <taxon>Gammaproteobacteria</taxon>
        <taxon>Enterobacterales</taxon>
        <taxon>Enterobacteriaceae</taxon>
        <taxon>Salmonella</taxon>
    </lineage>
</organism>
<reference key="1">
    <citation type="journal article" date="2001" name="Nature">
        <title>Complete genome sequence of Salmonella enterica serovar Typhimurium LT2.</title>
        <authorList>
            <person name="McClelland M."/>
            <person name="Sanderson K.E."/>
            <person name="Spieth J."/>
            <person name="Clifton S.W."/>
            <person name="Latreille P."/>
            <person name="Courtney L."/>
            <person name="Porwollik S."/>
            <person name="Ali J."/>
            <person name="Dante M."/>
            <person name="Du F."/>
            <person name="Hou S."/>
            <person name="Layman D."/>
            <person name="Leonard S."/>
            <person name="Nguyen C."/>
            <person name="Scott K."/>
            <person name="Holmes A."/>
            <person name="Grewal N."/>
            <person name="Mulvaney E."/>
            <person name="Ryan E."/>
            <person name="Sun H."/>
            <person name="Florea L."/>
            <person name="Miller W."/>
            <person name="Stoneking T."/>
            <person name="Nhan M."/>
            <person name="Waterston R."/>
            <person name="Wilson R.K."/>
        </authorList>
    </citation>
    <scope>NUCLEOTIDE SEQUENCE [LARGE SCALE GENOMIC DNA]</scope>
    <source>
        <strain>LT2 / SGSC1412 / ATCC 700720</strain>
    </source>
</reference>
<name>COAA_SALTY</name>
<evidence type="ECO:0000250" key="1"/>
<evidence type="ECO:0000255" key="2"/>
<evidence type="ECO:0000305" key="3"/>
<proteinExistence type="inferred from homology"/>
<accession>Q9L9K3</accession>